<comment type="function">
    <text evidence="1">Releases the supercoiling and torsional tension of DNA, which is introduced during the DNA replication and transcription, by transiently cleaving and rejoining one strand of the DNA duplex. Introduces a single-strand break via transesterification at a target site in duplex DNA. The scissile phosphodiester is attacked by the catalytic tyrosine of the enzyme, resulting in the formation of a DNA-(5'-phosphotyrosyl)-enzyme intermediate and the expulsion of a 3'-OH DNA strand. The free DNA strand then undergoes passage around the unbroken strand, thus removing DNA supercoils. Finally, in the religation step, the DNA 3'-OH attacks the covalent intermediate to expel the active-site tyrosine and restore the DNA phosphodiester backbone.</text>
</comment>
<comment type="catalytic activity">
    <reaction evidence="1">
        <text>ATP-independent breakage of single-stranded DNA, followed by passage and rejoining.</text>
        <dbReference type="EC" id="5.6.2.1"/>
    </reaction>
</comment>
<comment type="cofactor">
    <cofactor evidence="1">
        <name>Mg(2+)</name>
        <dbReference type="ChEBI" id="CHEBI:18420"/>
    </cofactor>
</comment>
<comment type="subunit">
    <text evidence="1">Monomer.</text>
</comment>
<comment type="similarity">
    <text evidence="1">Belongs to the type IA topoisomerase family.</text>
</comment>
<dbReference type="EC" id="5.6.2.1" evidence="1"/>
<dbReference type="EMBL" id="LT708304">
    <property type="protein sequence ID" value="SIU02298.1"/>
    <property type="molecule type" value="Genomic_DNA"/>
</dbReference>
<dbReference type="RefSeq" id="NP_857309.1">
    <property type="nucleotide sequence ID" value="NC_002945.3"/>
</dbReference>
<dbReference type="RefSeq" id="WP_003899617.1">
    <property type="nucleotide sequence ID" value="NC_002945.4"/>
</dbReference>
<dbReference type="SMR" id="P0A621"/>
<dbReference type="GeneID" id="45427643"/>
<dbReference type="KEGG" id="mbo:BQ2027_MB3670C"/>
<dbReference type="PATRIC" id="fig|233413.5.peg.4018"/>
<dbReference type="Proteomes" id="UP000001419">
    <property type="component" value="Chromosome"/>
</dbReference>
<dbReference type="GO" id="GO:0003677">
    <property type="term" value="F:DNA binding"/>
    <property type="evidence" value="ECO:0007669"/>
    <property type="project" value="UniProtKB-KW"/>
</dbReference>
<dbReference type="GO" id="GO:0003917">
    <property type="term" value="F:DNA topoisomerase type I (single strand cut, ATP-independent) activity"/>
    <property type="evidence" value="ECO:0007669"/>
    <property type="project" value="UniProtKB-UniRule"/>
</dbReference>
<dbReference type="GO" id="GO:0046872">
    <property type="term" value="F:metal ion binding"/>
    <property type="evidence" value="ECO:0007669"/>
    <property type="project" value="UniProtKB-KW"/>
</dbReference>
<dbReference type="GO" id="GO:0006265">
    <property type="term" value="P:DNA topological change"/>
    <property type="evidence" value="ECO:0007669"/>
    <property type="project" value="UniProtKB-UniRule"/>
</dbReference>
<dbReference type="CDD" id="cd00186">
    <property type="entry name" value="TOP1Ac"/>
    <property type="match status" value="1"/>
</dbReference>
<dbReference type="CDD" id="cd03363">
    <property type="entry name" value="TOPRIM_TopoIA_TopoI"/>
    <property type="match status" value="1"/>
</dbReference>
<dbReference type="FunFam" id="1.10.290.10:FF:000002">
    <property type="entry name" value="DNA topoisomerase 1"/>
    <property type="match status" value="1"/>
</dbReference>
<dbReference type="FunFam" id="3.40.50.140:FF:000001">
    <property type="entry name" value="DNA topoisomerase 1"/>
    <property type="match status" value="1"/>
</dbReference>
<dbReference type="Gene3D" id="3.40.50.140">
    <property type="match status" value="1"/>
</dbReference>
<dbReference type="Gene3D" id="1.10.460.10">
    <property type="entry name" value="Topoisomerase I, domain 2"/>
    <property type="match status" value="1"/>
</dbReference>
<dbReference type="Gene3D" id="2.70.20.10">
    <property type="entry name" value="Topoisomerase I, domain 3"/>
    <property type="match status" value="1"/>
</dbReference>
<dbReference type="Gene3D" id="1.10.290.10">
    <property type="entry name" value="Topoisomerase I, domain 4"/>
    <property type="match status" value="1"/>
</dbReference>
<dbReference type="HAMAP" id="MF_00952">
    <property type="entry name" value="Topoisom_1_prok"/>
    <property type="match status" value="1"/>
</dbReference>
<dbReference type="InterPro" id="IPR000380">
    <property type="entry name" value="Topo_IA"/>
</dbReference>
<dbReference type="InterPro" id="IPR003601">
    <property type="entry name" value="Topo_IA_2"/>
</dbReference>
<dbReference type="InterPro" id="IPR023406">
    <property type="entry name" value="Topo_IA_AS"/>
</dbReference>
<dbReference type="InterPro" id="IPR013497">
    <property type="entry name" value="Topo_IA_cen"/>
</dbReference>
<dbReference type="InterPro" id="IPR013824">
    <property type="entry name" value="Topo_IA_cen_sub1"/>
</dbReference>
<dbReference type="InterPro" id="IPR013825">
    <property type="entry name" value="Topo_IA_cen_sub2"/>
</dbReference>
<dbReference type="InterPro" id="IPR013826">
    <property type="entry name" value="Topo_IA_cen_sub3"/>
</dbReference>
<dbReference type="InterPro" id="IPR023405">
    <property type="entry name" value="Topo_IA_core_domain"/>
</dbReference>
<dbReference type="InterPro" id="IPR003602">
    <property type="entry name" value="Topo_IA_DNA-bd_dom"/>
</dbReference>
<dbReference type="InterPro" id="IPR005733">
    <property type="entry name" value="TopoI_bac-type"/>
</dbReference>
<dbReference type="InterPro" id="IPR028612">
    <property type="entry name" value="Topoisom_1_IA"/>
</dbReference>
<dbReference type="InterPro" id="IPR025589">
    <property type="entry name" value="Toprim_C_rpt"/>
</dbReference>
<dbReference type="InterPro" id="IPR006171">
    <property type="entry name" value="TOPRIM_dom"/>
</dbReference>
<dbReference type="InterPro" id="IPR034149">
    <property type="entry name" value="TOPRIM_TopoI"/>
</dbReference>
<dbReference type="NCBIfam" id="TIGR01051">
    <property type="entry name" value="topA_bact"/>
    <property type="match status" value="1"/>
</dbReference>
<dbReference type="PANTHER" id="PTHR42785:SF1">
    <property type="entry name" value="DNA TOPOISOMERASE"/>
    <property type="match status" value="1"/>
</dbReference>
<dbReference type="PANTHER" id="PTHR42785">
    <property type="entry name" value="DNA TOPOISOMERASE, TYPE IA, CORE"/>
    <property type="match status" value="1"/>
</dbReference>
<dbReference type="Pfam" id="PF01131">
    <property type="entry name" value="Topoisom_bac"/>
    <property type="match status" value="1"/>
</dbReference>
<dbReference type="Pfam" id="PF01751">
    <property type="entry name" value="Toprim"/>
    <property type="match status" value="1"/>
</dbReference>
<dbReference type="Pfam" id="PF13368">
    <property type="entry name" value="Toprim_C_rpt"/>
    <property type="match status" value="4"/>
</dbReference>
<dbReference type="PRINTS" id="PR00417">
    <property type="entry name" value="PRTPISMRASEI"/>
</dbReference>
<dbReference type="SMART" id="SM00437">
    <property type="entry name" value="TOP1Ac"/>
    <property type="match status" value="1"/>
</dbReference>
<dbReference type="SMART" id="SM00436">
    <property type="entry name" value="TOP1Bc"/>
    <property type="match status" value="1"/>
</dbReference>
<dbReference type="SMART" id="SM00493">
    <property type="entry name" value="TOPRIM"/>
    <property type="match status" value="1"/>
</dbReference>
<dbReference type="SUPFAM" id="SSF56712">
    <property type="entry name" value="Prokaryotic type I DNA topoisomerase"/>
    <property type="match status" value="1"/>
</dbReference>
<dbReference type="PROSITE" id="PS00396">
    <property type="entry name" value="TOPO_IA_1"/>
    <property type="match status" value="1"/>
</dbReference>
<dbReference type="PROSITE" id="PS52039">
    <property type="entry name" value="TOPO_IA_2"/>
    <property type="match status" value="1"/>
</dbReference>
<dbReference type="PROSITE" id="PS50880">
    <property type="entry name" value="TOPRIM"/>
    <property type="match status" value="1"/>
</dbReference>
<gene>
    <name evidence="1" type="primary">topA</name>
    <name type="ordered locus">BQ2027_MB3670C</name>
</gene>
<keyword id="KW-0238">DNA-binding</keyword>
<keyword id="KW-0413">Isomerase</keyword>
<keyword id="KW-0460">Magnesium</keyword>
<keyword id="KW-0479">Metal-binding</keyword>
<keyword id="KW-1185">Reference proteome</keyword>
<keyword id="KW-0799">Topoisomerase</keyword>
<feature type="chain" id="PRO_0000145157" description="DNA topoisomerase 1">
    <location>
        <begin position="1"/>
        <end position="934"/>
    </location>
</feature>
<feature type="domain" description="Toprim" evidence="1">
    <location>
        <begin position="18"/>
        <end position="142"/>
    </location>
</feature>
<feature type="domain" description="Topo IA-type catalytic" evidence="2">
    <location>
        <begin position="157"/>
        <end position="616"/>
    </location>
</feature>
<feature type="region of interest" description="Disordered" evidence="3">
    <location>
        <begin position="1"/>
        <end position="20"/>
    </location>
</feature>
<feature type="region of interest" description="Interaction with DNA" evidence="1">
    <location>
        <begin position="191"/>
        <end position="196"/>
    </location>
</feature>
<feature type="region of interest" description="Disordered" evidence="3">
    <location>
        <begin position="746"/>
        <end position="765"/>
    </location>
</feature>
<feature type="region of interest" description="Disordered" evidence="3">
    <location>
        <begin position="842"/>
        <end position="892"/>
    </location>
</feature>
<feature type="region of interest" description="Disordered" evidence="3">
    <location>
        <begin position="905"/>
        <end position="934"/>
    </location>
</feature>
<feature type="compositionally biased region" description="Basic residues" evidence="3">
    <location>
        <begin position="911"/>
        <end position="934"/>
    </location>
</feature>
<feature type="active site" description="O-(5'-phospho-DNA)-tyrosine intermediate" evidence="2">
    <location>
        <position position="342"/>
    </location>
</feature>
<feature type="binding site" evidence="1">
    <location>
        <position position="24"/>
    </location>
    <ligand>
        <name>Mg(2+)</name>
        <dbReference type="ChEBI" id="CHEBI:18420"/>
        <note>catalytic</note>
    </ligand>
</feature>
<feature type="binding site" evidence="1">
    <location>
        <position position="111"/>
    </location>
    <ligand>
        <name>Mg(2+)</name>
        <dbReference type="ChEBI" id="CHEBI:18420"/>
        <note>catalytic</note>
    </ligand>
</feature>
<feature type="site" description="Interaction with DNA" evidence="1">
    <location>
        <position position="48"/>
    </location>
</feature>
<feature type="site" description="Interaction with DNA" evidence="1">
    <location>
        <position position="167"/>
    </location>
</feature>
<feature type="site" description="Interaction with DNA" evidence="1">
    <location>
        <position position="168"/>
    </location>
</feature>
<feature type="site" description="Interaction with DNA" evidence="1">
    <location>
        <position position="171"/>
    </location>
</feature>
<feature type="site" description="Interaction with DNA" evidence="1">
    <location>
        <position position="176"/>
    </location>
</feature>
<feature type="site" description="Interaction with DNA" evidence="1">
    <location>
        <position position="183"/>
    </location>
</feature>
<feature type="site" description="Interaction with DNA" evidence="1">
    <location>
        <position position="344"/>
    </location>
</feature>
<feature type="site" description="Interaction with DNA" evidence="1">
    <location>
        <position position="547"/>
    </location>
</feature>
<protein>
    <recommendedName>
        <fullName evidence="1">DNA topoisomerase 1</fullName>
        <ecNumber evidence="1">5.6.2.1</ecNumber>
    </recommendedName>
    <alternativeName>
        <fullName evidence="1">DNA topoisomerase I</fullName>
    </alternativeName>
    <alternativeName>
        <fullName>Omega-protein</fullName>
    </alternativeName>
    <alternativeName>
        <fullName>Relaxing enzyme</fullName>
    </alternativeName>
    <alternativeName>
        <fullName>Swivelase</fullName>
    </alternativeName>
    <alternativeName>
        <fullName>Untwisting enzyme</fullName>
    </alternativeName>
</protein>
<name>TOP1_MYCBO</name>
<reference key="1">
    <citation type="journal article" date="2003" name="Proc. Natl. Acad. Sci. U.S.A.">
        <title>The complete genome sequence of Mycobacterium bovis.</title>
        <authorList>
            <person name="Garnier T."/>
            <person name="Eiglmeier K."/>
            <person name="Camus J.-C."/>
            <person name="Medina N."/>
            <person name="Mansoor H."/>
            <person name="Pryor M."/>
            <person name="Duthoy S."/>
            <person name="Grondin S."/>
            <person name="Lacroix C."/>
            <person name="Monsempe C."/>
            <person name="Simon S."/>
            <person name="Harris B."/>
            <person name="Atkin R."/>
            <person name="Doggett J."/>
            <person name="Mayes R."/>
            <person name="Keating L."/>
            <person name="Wheeler P.R."/>
            <person name="Parkhill J."/>
            <person name="Barrell B.G."/>
            <person name="Cole S.T."/>
            <person name="Gordon S.V."/>
            <person name="Hewinson R.G."/>
        </authorList>
    </citation>
    <scope>NUCLEOTIDE SEQUENCE [LARGE SCALE GENOMIC DNA]</scope>
    <source>
        <strain>ATCC BAA-935 / AF2122/97</strain>
    </source>
</reference>
<reference key="2">
    <citation type="journal article" date="2017" name="Genome Announc.">
        <title>Updated reference genome sequence and annotation of Mycobacterium bovis AF2122/97.</title>
        <authorList>
            <person name="Malone K.M."/>
            <person name="Farrell D."/>
            <person name="Stuber T.P."/>
            <person name="Schubert O.T."/>
            <person name="Aebersold R."/>
            <person name="Robbe-Austerman S."/>
            <person name="Gordon S.V."/>
        </authorList>
    </citation>
    <scope>NUCLEOTIDE SEQUENCE [LARGE SCALE GENOMIC DNA]</scope>
    <scope>GENOME REANNOTATION</scope>
    <source>
        <strain>ATCC BAA-935 / AF2122/97</strain>
    </source>
</reference>
<organism>
    <name type="scientific">Mycobacterium bovis (strain ATCC BAA-935 / AF2122/97)</name>
    <dbReference type="NCBI Taxonomy" id="233413"/>
    <lineage>
        <taxon>Bacteria</taxon>
        <taxon>Bacillati</taxon>
        <taxon>Actinomycetota</taxon>
        <taxon>Actinomycetes</taxon>
        <taxon>Mycobacteriales</taxon>
        <taxon>Mycobacteriaceae</taxon>
        <taxon>Mycobacterium</taxon>
        <taxon>Mycobacterium tuberculosis complex</taxon>
    </lineage>
</organism>
<proteinExistence type="inferred from homology"/>
<accession>P0A621</accession>
<accession>A0A1R3Y4T9</accession>
<accession>O08383</accession>
<accession>Q59567</accession>
<accession>X2BPY1</accession>
<evidence type="ECO:0000255" key="1">
    <source>
        <dbReference type="HAMAP-Rule" id="MF_00952"/>
    </source>
</evidence>
<evidence type="ECO:0000255" key="2">
    <source>
        <dbReference type="PROSITE-ProRule" id="PRU01383"/>
    </source>
</evidence>
<evidence type="ECO:0000256" key="3">
    <source>
        <dbReference type="SAM" id="MobiDB-lite"/>
    </source>
</evidence>
<sequence length="934" mass="102336">MADPKTKGRGSGGNGSGRRLVIVESPTKARKLASYLGSGYIVESSRGHIRDLPRAASDVPAKYKSQPWARLGVNVDADFEPLYIISPEKRSTVSELRGLLKDVDELYLATDGDREGEAIAWHLLETLKPRIPVKRMVFHEITEPAIRAAAEHPRDLDIDLVDAQETRRILDRLYGYEVSPVLWKKVAPKLSAGRVQSVATRIIVARERDRMAFRSAAYWDILAKLDASVSDPDAAPPTFSARLTAVAGRRVATGRDFDSLGTLRKGDEVIVLDEGSATALAAGLDGTQLTVASAEEKPYARRPYPPFMTSTLQQEASRKLRFSAERTMSIAQRLYENGYITYMRTDSTTLSESAINAARTQARQLYGDEYVAPAPRQYTRKVKNAQEAHEAIRPAGETFATPDAVRRELDGPNIDDFRLYELIWQRTVASQMADARGMTLSLRITGMSGHQEVVFSATGRTLTFPGFLKAYVETVDELVGGEADDAERRLPHLTPGQRLDIVELTPDGHATNPPARYTEASLVKALEELGIGRPSTYSSIIKTIQDRGYVHKKGSALVPSWVAFAVTGLLEQHFGRLVDYDFTAAMEDELDEIAAGNERRTNWLNNFYFGGDHGVPDSVARSGGLKKLVGINLEGIDAREVNSIKLFDDTHGRPIYVRVGKNGPYLERLVAGDTGEPTPQRANLSDSITPDELTLQVAEELFATPQQGRTLGLDPETGHEIVAREGRFGPYVTEILPEPAADAAAAAQGVKKRQKAAGPKPRTGSLLRSMDLQTVTLEDALRLLSLPRVVGVDPASGEEITAQNGRYGPYLKRGNDSRSLVTEDQIFTITLDEALKIYAEPKRRGRQSASAPPLRELGTDPASGKPMVIKDGRFGPYVTDGETNASLRKGDDVASITDERAAELLADRRARGPAKRPARKAARKVPAKKAAKRD</sequence>